<name>HISX_XYLFA</name>
<feature type="chain" id="PRO_0000135885" description="Histidinol dehydrogenase">
    <location>
        <begin position="1"/>
        <end position="431"/>
    </location>
</feature>
<feature type="active site" description="Proton acceptor" evidence="1">
    <location>
        <position position="326"/>
    </location>
</feature>
<feature type="active site" description="Proton acceptor" evidence="1">
    <location>
        <position position="327"/>
    </location>
</feature>
<feature type="binding site" evidence="1">
    <location>
        <position position="127"/>
    </location>
    <ligand>
        <name>NAD(+)</name>
        <dbReference type="ChEBI" id="CHEBI:57540"/>
    </ligand>
</feature>
<feature type="binding site" evidence="1">
    <location>
        <position position="189"/>
    </location>
    <ligand>
        <name>NAD(+)</name>
        <dbReference type="ChEBI" id="CHEBI:57540"/>
    </ligand>
</feature>
<feature type="binding site" evidence="1">
    <location>
        <position position="212"/>
    </location>
    <ligand>
        <name>NAD(+)</name>
        <dbReference type="ChEBI" id="CHEBI:57540"/>
    </ligand>
</feature>
<feature type="binding site" evidence="1">
    <location>
        <position position="237"/>
    </location>
    <ligand>
        <name>substrate</name>
    </ligand>
</feature>
<feature type="binding site" evidence="1">
    <location>
        <position position="259"/>
    </location>
    <ligand>
        <name>substrate</name>
    </ligand>
</feature>
<feature type="binding site" evidence="1">
    <location>
        <position position="259"/>
    </location>
    <ligand>
        <name>Zn(2+)</name>
        <dbReference type="ChEBI" id="CHEBI:29105"/>
    </ligand>
</feature>
<feature type="binding site" evidence="1">
    <location>
        <position position="262"/>
    </location>
    <ligand>
        <name>substrate</name>
    </ligand>
</feature>
<feature type="binding site" evidence="1">
    <location>
        <position position="262"/>
    </location>
    <ligand>
        <name>Zn(2+)</name>
        <dbReference type="ChEBI" id="CHEBI:29105"/>
    </ligand>
</feature>
<feature type="binding site" evidence="1">
    <location>
        <position position="327"/>
    </location>
    <ligand>
        <name>substrate</name>
    </ligand>
</feature>
<feature type="binding site" evidence="1">
    <location>
        <position position="360"/>
    </location>
    <ligand>
        <name>substrate</name>
    </ligand>
</feature>
<feature type="binding site" evidence="1">
    <location>
        <position position="360"/>
    </location>
    <ligand>
        <name>Zn(2+)</name>
        <dbReference type="ChEBI" id="CHEBI:29105"/>
    </ligand>
</feature>
<feature type="binding site" evidence="1">
    <location>
        <position position="414"/>
    </location>
    <ligand>
        <name>substrate</name>
    </ligand>
</feature>
<feature type="binding site" evidence="1">
    <location>
        <position position="419"/>
    </location>
    <ligand>
        <name>substrate</name>
    </ligand>
</feature>
<feature type="binding site" evidence="1">
    <location>
        <position position="419"/>
    </location>
    <ligand>
        <name>Zn(2+)</name>
        <dbReference type="ChEBI" id="CHEBI:29105"/>
    </ligand>
</feature>
<comment type="function">
    <text evidence="1">Catalyzes the sequential NAD-dependent oxidations of L-histidinol to L-histidinaldehyde and then to L-histidine.</text>
</comment>
<comment type="catalytic activity">
    <reaction evidence="1">
        <text>L-histidinol + 2 NAD(+) + H2O = L-histidine + 2 NADH + 3 H(+)</text>
        <dbReference type="Rhea" id="RHEA:20641"/>
        <dbReference type="ChEBI" id="CHEBI:15377"/>
        <dbReference type="ChEBI" id="CHEBI:15378"/>
        <dbReference type="ChEBI" id="CHEBI:57540"/>
        <dbReference type="ChEBI" id="CHEBI:57595"/>
        <dbReference type="ChEBI" id="CHEBI:57699"/>
        <dbReference type="ChEBI" id="CHEBI:57945"/>
        <dbReference type="EC" id="1.1.1.23"/>
    </reaction>
</comment>
<comment type="cofactor">
    <cofactor evidence="1">
        <name>Zn(2+)</name>
        <dbReference type="ChEBI" id="CHEBI:29105"/>
    </cofactor>
    <text evidence="1">Binds 1 zinc ion per subunit.</text>
</comment>
<comment type="pathway">
    <text evidence="1">Amino-acid biosynthesis; L-histidine biosynthesis; L-histidine from 5-phospho-alpha-D-ribose 1-diphosphate: step 9/9.</text>
</comment>
<comment type="similarity">
    <text evidence="1">Belongs to the histidinol dehydrogenase family.</text>
</comment>
<dbReference type="EC" id="1.1.1.23" evidence="1"/>
<dbReference type="EMBL" id="AE003849">
    <property type="protein sequence ID" value="AAF85018.1"/>
    <property type="molecule type" value="Genomic_DNA"/>
</dbReference>
<dbReference type="PIR" id="F82585">
    <property type="entry name" value="F82585"/>
</dbReference>
<dbReference type="RefSeq" id="WP_010894667.1">
    <property type="nucleotide sequence ID" value="NC_002488.3"/>
</dbReference>
<dbReference type="SMR" id="Q9PBC5"/>
<dbReference type="STRING" id="160492.XF_2219"/>
<dbReference type="KEGG" id="xfa:XF_2219"/>
<dbReference type="PATRIC" id="fig|160492.11.peg.2361"/>
<dbReference type="eggNOG" id="COG0141">
    <property type="taxonomic scope" value="Bacteria"/>
</dbReference>
<dbReference type="HOGENOM" id="CLU_006732_3_0_6"/>
<dbReference type="UniPathway" id="UPA00031">
    <property type="reaction ID" value="UER00014"/>
</dbReference>
<dbReference type="Proteomes" id="UP000000812">
    <property type="component" value="Chromosome"/>
</dbReference>
<dbReference type="GO" id="GO:0005829">
    <property type="term" value="C:cytosol"/>
    <property type="evidence" value="ECO:0007669"/>
    <property type="project" value="TreeGrafter"/>
</dbReference>
<dbReference type="GO" id="GO:0004399">
    <property type="term" value="F:histidinol dehydrogenase activity"/>
    <property type="evidence" value="ECO:0007669"/>
    <property type="project" value="UniProtKB-UniRule"/>
</dbReference>
<dbReference type="GO" id="GO:0051287">
    <property type="term" value="F:NAD binding"/>
    <property type="evidence" value="ECO:0007669"/>
    <property type="project" value="InterPro"/>
</dbReference>
<dbReference type="GO" id="GO:0008270">
    <property type="term" value="F:zinc ion binding"/>
    <property type="evidence" value="ECO:0007669"/>
    <property type="project" value="UniProtKB-UniRule"/>
</dbReference>
<dbReference type="GO" id="GO:0000105">
    <property type="term" value="P:L-histidine biosynthetic process"/>
    <property type="evidence" value="ECO:0007669"/>
    <property type="project" value="UniProtKB-UniRule"/>
</dbReference>
<dbReference type="CDD" id="cd06572">
    <property type="entry name" value="Histidinol_dh"/>
    <property type="match status" value="1"/>
</dbReference>
<dbReference type="FunFam" id="3.40.50.1980:FF:000001">
    <property type="entry name" value="Histidinol dehydrogenase"/>
    <property type="match status" value="1"/>
</dbReference>
<dbReference type="FunFam" id="3.40.50.1980:FF:000002">
    <property type="entry name" value="Histidinol dehydrogenase, chloroplastic"/>
    <property type="match status" value="1"/>
</dbReference>
<dbReference type="Gene3D" id="1.20.5.1300">
    <property type="match status" value="1"/>
</dbReference>
<dbReference type="Gene3D" id="3.40.50.1980">
    <property type="entry name" value="Nitrogenase molybdenum iron protein domain"/>
    <property type="match status" value="2"/>
</dbReference>
<dbReference type="HAMAP" id="MF_01024">
    <property type="entry name" value="HisD"/>
    <property type="match status" value="1"/>
</dbReference>
<dbReference type="InterPro" id="IPR016161">
    <property type="entry name" value="Ald_DH/histidinol_DH"/>
</dbReference>
<dbReference type="InterPro" id="IPR001692">
    <property type="entry name" value="Histidinol_DH_CS"/>
</dbReference>
<dbReference type="InterPro" id="IPR022695">
    <property type="entry name" value="Histidinol_DH_monofunct"/>
</dbReference>
<dbReference type="InterPro" id="IPR012131">
    <property type="entry name" value="Hstdl_DH"/>
</dbReference>
<dbReference type="NCBIfam" id="TIGR00069">
    <property type="entry name" value="hisD"/>
    <property type="match status" value="1"/>
</dbReference>
<dbReference type="PANTHER" id="PTHR21256:SF2">
    <property type="entry name" value="HISTIDINE BIOSYNTHESIS TRIFUNCTIONAL PROTEIN"/>
    <property type="match status" value="1"/>
</dbReference>
<dbReference type="PANTHER" id="PTHR21256">
    <property type="entry name" value="HISTIDINOL DEHYDROGENASE HDH"/>
    <property type="match status" value="1"/>
</dbReference>
<dbReference type="Pfam" id="PF00815">
    <property type="entry name" value="Histidinol_dh"/>
    <property type="match status" value="1"/>
</dbReference>
<dbReference type="PIRSF" id="PIRSF000099">
    <property type="entry name" value="Histidinol_dh"/>
    <property type="match status" value="1"/>
</dbReference>
<dbReference type="PRINTS" id="PR00083">
    <property type="entry name" value="HOLDHDRGNASE"/>
</dbReference>
<dbReference type="SUPFAM" id="SSF53720">
    <property type="entry name" value="ALDH-like"/>
    <property type="match status" value="1"/>
</dbReference>
<dbReference type="PROSITE" id="PS00611">
    <property type="entry name" value="HISOL_DEHYDROGENASE"/>
    <property type="match status" value="1"/>
</dbReference>
<keyword id="KW-0028">Amino-acid biosynthesis</keyword>
<keyword id="KW-0368">Histidine biosynthesis</keyword>
<keyword id="KW-0479">Metal-binding</keyword>
<keyword id="KW-0520">NAD</keyword>
<keyword id="KW-0560">Oxidoreductase</keyword>
<keyword id="KW-0862">Zinc</keyword>
<reference key="1">
    <citation type="journal article" date="2000" name="Nature">
        <title>The genome sequence of the plant pathogen Xylella fastidiosa.</title>
        <authorList>
            <person name="Simpson A.J.G."/>
            <person name="Reinach F.C."/>
            <person name="Arruda P."/>
            <person name="Abreu F.A."/>
            <person name="Acencio M."/>
            <person name="Alvarenga R."/>
            <person name="Alves L.M.C."/>
            <person name="Araya J.E."/>
            <person name="Baia G.S."/>
            <person name="Baptista C.S."/>
            <person name="Barros M.H."/>
            <person name="Bonaccorsi E.D."/>
            <person name="Bordin S."/>
            <person name="Bove J.M."/>
            <person name="Briones M.R.S."/>
            <person name="Bueno M.R.P."/>
            <person name="Camargo A.A."/>
            <person name="Camargo L.E.A."/>
            <person name="Carraro D.M."/>
            <person name="Carrer H."/>
            <person name="Colauto N.B."/>
            <person name="Colombo C."/>
            <person name="Costa F.F."/>
            <person name="Costa M.C.R."/>
            <person name="Costa-Neto C.M."/>
            <person name="Coutinho L.L."/>
            <person name="Cristofani M."/>
            <person name="Dias-Neto E."/>
            <person name="Docena C."/>
            <person name="El-Dorry H."/>
            <person name="Facincani A.P."/>
            <person name="Ferreira A.J.S."/>
            <person name="Ferreira V.C.A."/>
            <person name="Ferro J.A."/>
            <person name="Fraga J.S."/>
            <person name="Franca S.C."/>
            <person name="Franco M.C."/>
            <person name="Frohme M."/>
            <person name="Furlan L.R."/>
            <person name="Garnier M."/>
            <person name="Goldman G.H."/>
            <person name="Goldman M.H.S."/>
            <person name="Gomes S.L."/>
            <person name="Gruber A."/>
            <person name="Ho P.L."/>
            <person name="Hoheisel J.D."/>
            <person name="Junqueira M.L."/>
            <person name="Kemper E.L."/>
            <person name="Kitajima J.P."/>
            <person name="Krieger J.E."/>
            <person name="Kuramae E.E."/>
            <person name="Laigret F."/>
            <person name="Lambais M.R."/>
            <person name="Leite L.C.C."/>
            <person name="Lemos E.G.M."/>
            <person name="Lemos M.V.F."/>
            <person name="Lopes S.A."/>
            <person name="Lopes C.R."/>
            <person name="Machado J.A."/>
            <person name="Machado M.A."/>
            <person name="Madeira A.M.B.N."/>
            <person name="Madeira H.M.F."/>
            <person name="Marino C.L."/>
            <person name="Marques M.V."/>
            <person name="Martins E.A.L."/>
            <person name="Martins E.M.F."/>
            <person name="Matsukuma A.Y."/>
            <person name="Menck C.F.M."/>
            <person name="Miracca E.C."/>
            <person name="Miyaki C.Y."/>
            <person name="Monteiro-Vitorello C.B."/>
            <person name="Moon D.H."/>
            <person name="Nagai M.A."/>
            <person name="Nascimento A.L.T.O."/>
            <person name="Netto L.E.S."/>
            <person name="Nhani A. Jr."/>
            <person name="Nobrega F.G."/>
            <person name="Nunes L.R."/>
            <person name="Oliveira M.A."/>
            <person name="de Oliveira M.C."/>
            <person name="de Oliveira R.C."/>
            <person name="Palmieri D.A."/>
            <person name="Paris A."/>
            <person name="Peixoto B.R."/>
            <person name="Pereira G.A.G."/>
            <person name="Pereira H.A. Jr."/>
            <person name="Pesquero J.B."/>
            <person name="Quaggio R.B."/>
            <person name="Roberto P.G."/>
            <person name="Rodrigues V."/>
            <person name="de Rosa A.J.M."/>
            <person name="de Rosa V.E. Jr."/>
            <person name="de Sa R.G."/>
            <person name="Santelli R.V."/>
            <person name="Sawasaki H.E."/>
            <person name="da Silva A.C.R."/>
            <person name="da Silva A.M."/>
            <person name="da Silva F.R."/>
            <person name="Silva W.A. Jr."/>
            <person name="da Silveira J.F."/>
            <person name="Silvestri M.L.Z."/>
            <person name="Siqueira W.J."/>
            <person name="de Souza A.A."/>
            <person name="de Souza A.P."/>
            <person name="Terenzi M.F."/>
            <person name="Truffi D."/>
            <person name="Tsai S.M."/>
            <person name="Tsuhako M.H."/>
            <person name="Vallada H."/>
            <person name="Van Sluys M.A."/>
            <person name="Verjovski-Almeida S."/>
            <person name="Vettore A.L."/>
            <person name="Zago M.A."/>
            <person name="Zatz M."/>
            <person name="Meidanis J."/>
            <person name="Setubal J.C."/>
        </authorList>
    </citation>
    <scope>NUCLEOTIDE SEQUENCE [LARGE SCALE GENOMIC DNA]</scope>
    <source>
        <strain>9a5c</strain>
    </source>
</reference>
<organism>
    <name type="scientific">Xylella fastidiosa (strain 9a5c)</name>
    <dbReference type="NCBI Taxonomy" id="160492"/>
    <lineage>
        <taxon>Bacteria</taxon>
        <taxon>Pseudomonadati</taxon>
        <taxon>Pseudomonadota</taxon>
        <taxon>Gammaproteobacteria</taxon>
        <taxon>Lysobacterales</taxon>
        <taxon>Lysobacteraceae</taxon>
        <taxon>Xylella</taxon>
    </lineage>
</organism>
<sequence>MKIIDWNQLDTAAQAQTLTRPAQTIATQTREAVAALIEQVRRGGDTALRDITARLDGVDLATFEVTAAELAAAATAVAPELQHAMQTAAARIEAFHRAGMTNGYRVETAPGVVCERLVRPIARVGLYVPAGSAPLFSTALMLGVPARLAGCREVVLCTPPSKDGRANPAVLLAARLTGVTRVFTLGGAQAIAAMAYGTASVPTCDKVFGPGNSFVTEAKQQLAQAGVVAIDMPAGPSEVLVIADAAANPAFIAADLLSQAEHGPDSQVLLLSDSDALMTAVQTALALQLQQLSRAEIARQALAQSRLIKVATLETAFDISNRYAPEHLILALRQPRAWLHRVAAAGSVFLGDYTPEALGDYCSGTNHVLPTGGAARAYSGVSVSSFQNMISVQAASRSGIAEIGDCALTLARAEGLDAHANAVALRMGTVP</sequence>
<protein>
    <recommendedName>
        <fullName evidence="1">Histidinol dehydrogenase</fullName>
        <shortName evidence="1">HDH</shortName>
        <ecNumber evidence="1">1.1.1.23</ecNumber>
    </recommendedName>
</protein>
<proteinExistence type="inferred from homology"/>
<gene>
    <name evidence="1" type="primary">hisD</name>
    <name type="ordered locus">XF_2219</name>
</gene>
<evidence type="ECO:0000255" key="1">
    <source>
        <dbReference type="HAMAP-Rule" id="MF_01024"/>
    </source>
</evidence>
<accession>Q9PBC5</accession>